<reference key="1">
    <citation type="journal article" date="2002" name="Proc. Natl. Acad. Sci. U.S.A.">
        <title>Extensive mosaic structure revealed by the complete genome sequence of uropathogenic Escherichia coli.</title>
        <authorList>
            <person name="Welch R.A."/>
            <person name="Burland V."/>
            <person name="Plunkett G. III"/>
            <person name="Redford P."/>
            <person name="Roesch P."/>
            <person name="Rasko D."/>
            <person name="Buckles E.L."/>
            <person name="Liou S.-R."/>
            <person name="Boutin A."/>
            <person name="Hackett J."/>
            <person name="Stroud D."/>
            <person name="Mayhew G.F."/>
            <person name="Rose D.J."/>
            <person name="Zhou S."/>
            <person name="Schwartz D.C."/>
            <person name="Perna N.T."/>
            <person name="Mobley H.L.T."/>
            <person name="Donnenberg M.S."/>
            <person name="Blattner F.R."/>
        </authorList>
    </citation>
    <scope>NUCLEOTIDE SEQUENCE [LARGE SCALE GENOMIC DNA]</scope>
    <source>
        <strain>CFT073 / ATCC 700928 / UPEC</strain>
    </source>
</reference>
<name>XANP_ECOL6</name>
<feature type="chain" id="PRO_0000165971" description="Xanthine permease XanP">
    <location>
        <begin position="1"/>
        <end position="463"/>
    </location>
</feature>
<feature type="transmembrane region" description="Helical" evidence="2">
    <location>
        <begin position="43"/>
        <end position="63"/>
    </location>
</feature>
<feature type="transmembrane region" description="Helical" evidence="2">
    <location>
        <begin position="71"/>
        <end position="91"/>
    </location>
</feature>
<feature type="transmembrane region" description="Helical" evidence="2">
    <location>
        <begin position="93"/>
        <end position="113"/>
    </location>
</feature>
<feature type="transmembrane region" description="Helical" evidence="2">
    <location>
        <begin position="126"/>
        <end position="146"/>
    </location>
</feature>
<feature type="transmembrane region" description="Helical" evidence="2">
    <location>
        <begin position="156"/>
        <end position="176"/>
    </location>
</feature>
<feature type="transmembrane region" description="Helical" evidence="2">
    <location>
        <begin position="192"/>
        <end position="212"/>
    </location>
</feature>
<feature type="transmembrane region" description="Helical" evidence="2">
    <location>
        <begin position="222"/>
        <end position="242"/>
    </location>
</feature>
<feature type="transmembrane region" description="Helical" evidence="2">
    <location>
        <begin position="260"/>
        <end position="280"/>
    </location>
</feature>
<feature type="transmembrane region" description="Helical" evidence="2">
    <location>
        <begin position="352"/>
        <end position="372"/>
    </location>
</feature>
<feature type="transmembrane region" description="Helical" evidence="2">
    <location>
        <begin position="379"/>
        <end position="399"/>
    </location>
</feature>
<feature type="transmembrane region" description="Helical" evidence="2">
    <location>
        <begin position="409"/>
        <end position="429"/>
    </location>
</feature>
<feature type="transmembrane region" description="Helical" evidence="2">
    <location>
        <begin position="439"/>
        <end position="459"/>
    </location>
</feature>
<evidence type="ECO:0000250" key="1">
    <source>
        <dbReference type="UniProtKB" id="P0AGM9"/>
    </source>
</evidence>
<evidence type="ECO:0000255" key="2"/>
<evidence type="ECO:0000305" key="3"/>
<proteinExistence type="inferred from homology"/>
<sequence length="463" mass="48868">MSVSTLESENAQPVAQTQNSELIYRLEDRPPLPQTLFAACQHLLAMFVAVITPALLICQALGLPAQDTQHIISMSLFASGVASIIQIKAWGPVGSGLLSIQGTSFNFVAPLIMGGTALKTGGADVPTMMAALFGTLMLASCTEMVISRVLHLARRIITPLVSGVVVMIIGLSLIQVGLTSIGGGYAAMSDNTFGAPKNLLLAGVVLALIILLNRQRNPYLRVASLVIAMAAGYALAWFMGMLPESNEPMTQELIMVPTPLYYGLGIEWSLLLPLMLVFMITSLETIGDITATSDVSEQPVSGPLYMKRLKGGVLANGLNSFVSAVFNTFPNSCFGQNNGVIQLTGVASRYVGFVVALMLIVLGLFPAVSGFVQHIPEPVLGGATLVMFGTIAASGVRIVSREPLNRRAILIIALSLAVGLGVSQQPLILQFAPEWLKNLLSSGIAAGGITAIVLNLIFPPEKQ</sequence>
<comment type="function">
    <text evidence="1">Specific, proton motive force-dependent high-affinity transporter for xanthine.</text>
</comment>
<comment type="catalytic activity">
    <reaction evidence="1">
        <text>xanthine(in) + H(+)(in) = xanthine(out) + H(+)(out)</text>
        <dbReference type="Rhea" id="RHEA:29663"/>
        <dbReference type="ChEBI" id="CHEBI:15378"/>
        <dbReference type="ChEBI" id="CHEBI:17712"/>
    </reaction>
</comment>
<comment type="subcellular location">
    <subcellularLocation>
        <location evidence="1">Cell inner membrane</location>
        <topology evidence="2">Multi-pass membrane protein</topology>
    </subcellularLocation>
</comment>
<comment type="similarity">
    <text evidence="3">Belongs to the nucleobase:cation symporter-2 (NCS2) (TC 2.A.40) family.</text>
</comment>
<comment type="sequence caution" evidence="3">
    <conflict type="erroneous initiation">
        <sequence resource="EMBL-CDS" id="AAN82915"/>
    </conflict>
    <text>Extended N-terminus.</text>
</comment>
<accession>P0AGN0</accession>
<accession>P27432</accession>
<gene>
    <name type="primary">xanP</name>
    <name type="ordered locus">c4479</name>
</gene>
<dbReference type="EMBL" id="AE014075">
    <property type="protein sequence ID" value="AAN82915.1"/>
    <property type="status" value="ALT_INIT"/>
    <property type="molecule type" value="Genomic_DNA"/>
</dbReference>
<dbReference type="RefSeq" id="WP_001295238.1">
    <property type="nucleotide sequence ID" value="NZ_CP051263.1"/>
</dbReference>
<dbReference type="SMR" id="P0AGN0"/>
<dbReference type="STRING" id="199310.c4479"/>
<dbReference type="GeneID" id="93778369"/>
<dbReference type="KEGG" id="ecc:c4479"/>
<dbReference type="eggNOG" id="COG2233">
    <property type="taxonomic scope" value="Bacteria"/>
</dbReference>
<dbReference type="HOGENOM" id="CLU_017959_8_0_6"/>
<dbReference type="Proteomes" id="UP000001410">
    <property type="component" value="Chromosome"/>
</dbReference>
<dbReference type="GO" id="GO:0005886">
    <property type="term" value="C:plasma membrane"/>
    <property type="evidence" value="ECO:0007669"/>
    <property type="project" value="UniProtKB-SubCell"/>
</dbReference>
<dbReference type="GO" id="GO:0042907">
    <property type="term" value="F:xanthine transmembrane transporter activity"/>
    <property type="evidence" value="ECO:0007669"/>
    <property type="project" value="TreeGrafter"/>
</dbReference>
<dbReference type="InterPro" id="IPR006043">
    <property type="entry name" value="NCS2"/>
</dbReference>
<dbReference type="InterPro" id="IPR006042">
    <property type="entry name" value="Xan_ur_permease"/>
</dbReference>
<dbReference type="NCBIfam" id="TIGR00801">
    <property type="entry name" value="ncs2"/>
    <property type="match status" value="1"/>
</dbReference>
<dbReference type="NCBIfam" id="NF037981">
    <property type="entry name" value="NCS2_1"/>
    <property type="match status" value="1"/>
</dbReference>
<dbReference type="PANTHER" id="PTHR42810">
    <property type="entry name" value="PURINE PERMEASE C1399.01C-RELATED"/>
    <property type="match status" value="1"/>
</dbReference>
<dbReference type="PANTHER" id="PTHR42810:SF2">
    <property type="entry name" value="PURINE PERMEASE C1399.01C-RELATED"/>
    <property type="match status" value="1"/>
</dbReference>
<dbReference type="Pfam" id="PF00860">
    <property type="entry name" value="Xan_ur_permease"/>
    <property type="match status" value="1"/>
</dbReference>
<dbReference type="PROSITE" id="PS01116">
    <property type="entry name" value="XANTH_URACIL_PERMASE"/>
    <property type="match status" value="1"/>
</dbReference>
<protein>
    <recommendedName>
        <fullName evidence="1">Xanthine permease XanP</fullName>
    </recommendedName>
</protein>
<organism>
    <name type="scientific">Escherichia coli O6:H1 (strain CFT073 / ATCC 700928 / UPEC)</name>
    <dbReference type="NCBI Taxonomy" id="199310"/>
    <lineage>
        <taxon>Bacteria</taxon>
        <taxon>Pseudomonadati</taxon>
        <taxon>Pseudomonadota</taxon>
        <taxon>Gammaproteobacteria</taxon>
        <taxon>Enterobacterales</taxon>
        <taxon>Enterobacteriaceae</taxon>
        <taxon>Escherichia</taxon>
    </lineage>
</organism>
<keyword id="KW-0997">Cell inner membrane</keyword>
<keyword id="KW-1003">Cell membrane</keyword>
<keyword id="KW-0472">Membrane</keyword>
<keyword id="KW-1185">Reference proteome</keyword>
<keyword id="KW-0812">Transmembrane</keyword>
<keyword id="KW-1133">Transmembrane helix</keyword>
<keyword id="KW-0813">Transport</keyword>